<gene>
    <name evidence="1" type="primary">alaS</name>
    <name type="ordered locus">Pmob_0620</name>
</gene>
<name>SYA_PETMO</name>
<organism>
    <name type="scientific">Petrotoga mobilis (strain DSM 10674 / SJ95)</name>
    <dbReference type="NCBI Taxonomy" id="403833"/>
    <lineage>
        <taxon>Bacteria</taxon>
        <taxon>Thermotogati</taxon>
        <taxon>Thermotogota</taxon>
        <taxon>Thermotogae</taxon>
        <taxon>Petrotogales</taxon>
        <taxon>Petrotogaceae</taxon>
        <taxon>Petrotoga</taxon>
    </lineage>
</organism>
<feature type="chain" id="PRO_0000347719" description="Alanine--tRNA ligase">
    <location>
        <begin position="1"/>
        <end position="876"/>
    </location>
</feature>
<feature type="binding site" evidence="1">
    <location>
        <position position="566"/>
    </location>
    <ligand>
        <name>Zn(2+)</name>
        <dbReference type="ChEBI" id="CHEBI:29105"/>
    </ligand>
</feature>
<feature type="binding site" evidence="1">
    <location>
        <position position="570"/>
    </location>
    <ligand>
        <name>Zn(2+)</name>
        <dbReference type="ChEBI" id="CHEBI:29105"/>
    </ligand>
</feature>
<feature type="binding site" evidence="1">
    <location>
        <position position="668"/>
    </location>
    <ligand>
        <name>Zn(2+)</name>
        <dbReference type="ChEBI" id="CHEBI:29105"/>
    </ligand>
</feature>
<feature type="binding site" evidence="1">
    <location>
        <position position="672"/>
    </location>
    <ligand>
        <name>Zn(2+)</name>
        <dbReference type="ChEBI" id="CHEBI:29105"/>
    </ligand>
</feature>
<accession>A9BJE0</accession>
<reference key="1">
    <citation type="submission" date="2007-11" db="EMBL/GenBank/DDBJ databases">
        <title>Complete sequence of Petroga mobilis SJ95.</title>
        <authorList>
            <consortium name="US DOE Joint Genome Institute"/>
            <person name="Copeland A."/>
            <person name="Lucas S."/>
            <person name="Lapidus A."/>
            <person name="Barry K."/>
            <person name="Glavina del Rio T."/>
            <person name="Dalin E."/>
            <person name="Tice H."/>
            <person name="Pitluck S."/>
            <person name="Meincke L."/>
            <person name="Brettin T."/>
            <person name="Bruce D."/>
            <person name="Detter J.C."/>
            <person name="Han C."/>
            <person name="Kuske C.R."/>
            <person name="Schmutz J."/>
            <person name="Larimer F."/>
            <person name="Land M."/>
            <person name="Hauser L."/>
            <person name="Kyrpides N."/>
            <person name="Mikhailova N."/>
            <person name="Noll K."/>
            <person name="Richardson P."/>
        </authorList>
    </citation>
    <scope>NUCLEOTIDE SEQUENCE [LARGE SCALE GENOMIC DNA]</scope>
    <source>
        <strain>DSM 10674 / SJ95</strain>
    </source>
</reference>
<dbReference type="EC" id="6.1.1.7" evidence="1"/>
<dbReference type="EMBL" id="CP000879">
    <property type="protein sequence ID" value="ABX31354.1"/>
    <property type="molecule type" value="Genomic_DNA"/>
</dbReference>
<dbReference type="RefSeq" id="WP_012208458.1">
    <property type="nucleotide sequence ID" value="NC_010003.1"/>
</dbReference>
<dbReference type="SMR" id="A9BJE0"/>
<dbReference type="STRING" id="403833.Pmob_0620"/>
<dbReference type="KEGG" id="pmo:Pmob_0620"/>
<dbReference type="eggNOG" id="COG0013">
    <property type="taxonomic scope" value="Bacteria"/>
</dbReference>
<dbReference type="HOGENOM" id="CLU_004485_1_1_0"/>
<dbReference type="OrthoDB" id="9803884at2"/>
<dbReference type="Proteomes" id="UP000000789">
    <property type="component" value="Chromosome"/>
</dbReference>
<dbReference type="GO" id="GO:0005829">
    <property type="term" value="C:cytosol"/>
    <property type="evidence" value="ECO:0007669"/>
    <property type="project" value="TreeGrafter"/>
</dbReference>
<dbReference type="GO" id="GO:0004813">
    <property type="term" value="F:alanine-tRNA ligase activity"/>
    <property type="evidence" value="ECO:0007669"/>
    <property type="project" value="UniProtKB-UniRule"/>
</dbReference>
<dbReference type="GO" id="GO:0002161">
    <property type="term" value="F:aminoacyl-tRNA deacylase activity"/>
    <property type="evidence" value="ECO:0007669"/>
    <property type="project" value="TreeGrafter"/>
</dbReference>
<dbReference type="GO" id="GO:0005524">
    <property type="term" value="F:ATP binding"/>
    <property type="evidence" value="ECO:0007669"/>
    <property type="project" value="UniProtKB-UniRule"/>
</dbReference>
<dbReference type="GO" id="GO:0000049">
    <property type="term" value="F:tRNA binding"/>
    <property type="evidence" value="ECO:0007669"/>
    <property type="project" value="UniProtKB-KW"/>
</dbReference>
<dbReference type="GO" id="GO:0008270">
    <property type="term" value="F:zinc ion binding"/>
    <property type="evidence" value="ECO:0007669"/>
    <property type="project" value="UniProtKB-UniRule"/>
</dbReference>
<dbReference type="GO" id="GO:0006419">
    <property type="term" value="P:alanyl-tRNA aminoacylation"/>
    <property type="evidence" value="ECO:0007669"/>
    <property type="project" value="UniProtKB-UniRule"/>
</dbReference>
<dbReference type="CDD" id="cd00673">
    <property type="entry name" value="AlaRS_core"/>
    <property type="match status" value="1"/>
</dbReference>
<dbReference type="FunFam" id="3.10.310.40:FF:000001">
    <property type="entry name" value="Alanine--tRNA ligase"/>
    <property type="match status" value="1"/>
</dbReference>
<dbReference type="FunFam" id="3.30.54.20:FF:000001">
    <property type="entry name" value="Alanine--tRNA ligase"/>
    <property type="match status" value="1"/>
</dbReference>
<dbReference type="FunFam" id="3.30.930.10:FF:000004">
    <property type="entry name" value="Alanine--tRNA ligase"/>
    <property type="match status" value="1"/>
</dbReference>
<dbReference type="FunFam" id="3.30.980.10:FF:000004">
    <property type="entry name" value="Alanine--tRNA ligase, cytoplasmic"/>
    <property type="match status" value="1"/>
</dbReference>
<dbReference type="Gene3D" id="2.40.30.130">
    <property type="match status" value="1"/>
</dbReference>
<dbReference type="Gene3D" id="3.10.310.40">
    <property type="match status" value="1"/>
</dbReference>
<dbReference type="Gene3D" id="3.30.54.20">
    <property type="match status" value="1"/>
</dbReference>
<dbReference type="Gene3D" id="6.10.250.550">
    <property type="match status" value="1"/>
</dbReference>
<dbReference type="Gene3D" id="3.30.930.10">
    <property type="entry name" value="Bira Bifunctional Protein, Domain 2"/>
    <property type="match status" value="1"/>
</dbReference>
<dbReference type="Gene3D" id="3.30.980.10">
    <property type="entry name" value="Threonyl-trna Synthetase, Chain A, domain 2"/>
    <property type="match status" value="1"/>
</dbReference>
<dbReference type="HAMAP" id="MF_00036_B">
    <property type="entry name" value="Ala_tRNA_synth_B"/>
    <property type="match status" value="1"/>
</dbReference>
<dbReference type="InterPro" id="IPR045864">
    <property type="entry name" value="aa-tRNA-synth_II/BPL/LPL"/>
</dbReference>
<dbReference type="InterPro" id="IPR002318">
    <property type="entry name" value="Ala-tRNA-lgiase_IIc"/>
</dbReference>
<dbReference type="InterPro" id="IPR018162">
    <property type="entry name" value="Ala-tRNA-ligase_IIc_anticod-bd"/>
</dbReference>
<dbReference type="InterPro" id="IPR018165">
    <property type="entry name" value="Ala-tRNA-synth_IIc_core"/>
</dbReference>
<dbReference type="InterPro" id="IPR018164">
    <property type="entry name" value="Ala-tRNA-synth_IIc_N"/>
</dbReference>
<dbReference type="InterPro" id="IPR050058">
    <property type="entry name" value="Ala-tRNA_ligase"/>
</dbReference>
<dbReference type="InterPro" id="IPR023033">
    <property type="entry name" value="Ala_tRNA_ligase_euk/bac"/>
</dbReference>
<dbReference type="InterPro" id="IPR003156">
    <property type="entry name" value="DHHA1_dom"/>
</dbReference>
<dbReference type="InterPro" id="IPR018163">
    <property type="entry name" value="Thr/Ala-tRNA-synth_IIc_edit"/>
</dbReference>
<dbReference type="InterPro" id="IPR009000">
    <property type="entry name" value="Transl_B-barrel_sf"/>
</dbReference>
<dbReference type="InterPro" id="IPR012947">
    <property type="entry name" value="tRNA_SAD"/>
</dbReference>
<dbReference type="NCBIfam" id="TIGR00344">
    <property type="entry name" value="alaS"/>
    <property type="match status" value="1"/>
</dbReference>
<dbReference type="PANTHER" id="PTHR11777:SF9">
    <property type="entry name" value="ALANINE--TRNA LIGASE, CYTOPLASMIC"/>
    <property type="match status" value="1"/>
</dbReference>
<dbReference type="PANTHER" id="PTHR11777">
    <property type="entry name" value="ALANYL-TRNA SYNTHETASE"/>
    <property type="match status" value="1"/>
</dbReference>
<dbReference type="Pfam" id="PF02272">
    <property type="entry name" value="DHHA1"/>
    <property type="match status" value="1"/>
</dbReference>
<dbReference type="Pfam" id="PF01411">
    <property type="entry name" value="tRNA-synt_2c"/>
    <property type="match status" value="1"/>
</dbReference>
<dbReference type="Pfam" id="PF07973">
    <property type="entry name" value="tRNA_SAD"/>
    <property type="match status" value="1"/>
</dbReference>
<dbReference type="PRINTS" id="PR00980">
    <property type="entry name" value="TRNASYNTHALA"/>
</dbReference>
<dbReference type="SMART" id="SM00863">
    <property type="entry name" value="tRNA_SAD"/>
    <property type="match status" value="1"/>
</dbReference>
<dbReference type="SUPFAM" id="SSF55681">
    <property type="entry name" value="Class II aaRS and biotin synthetases"/>
    <property type="match status" value="1"/>
</dbReference>
<dbReference type="SUPFAM" id="SSF101353">
    <property type="entry name" value="Putative anticodon-binding domain of alanyl-tRNA synthetase (AlaRS)"/>
    <property type="match status" value="1"/>
</dbReference>
<dbReference type="SUPFAM" id="SSF55186">
    <property type="entry name" value="ThrRS/AlaRS common domain"/>
    <property type="match status" value="1"/>
</dbReference>
<dbReference type="SUPFAM" id="SSF50447">
    <property type="entry name" value="Translation proteins"/>
    <property type="match status" value="1"/>
</dbReference>
<dbReference type="PROSITE" id="PS50860">
    <property type="entry name" value="AA_TRNA_LIGASE_II_ALA"/>
    <property type="match status" value="1"/>
</dbReference>
<keyword id="KW-0030">Aminoacyl-tRNA synthetase</keyword>
<keyword id="KW-0067">ATP-binding</keyword>
<keyword id="KW-0963">Cytoplasm</keyword>
<keyword id="KW-0436">Ligase</keyword>
<keyword id="KW-0479">Metal-binding</keyword>
<keyword id="KW-0547">Nucleotide-binding</keyword>
<keyword id="KW-0648">Protein biosynthesis</keyword>
<keyword id="KW-0694">RNA-binding</keyword>
<keyword id="KW-0820">tRNA-binding</keyword>
<keyword id="KW-0862">Zinc</keyword>
<sequence>MKYFTSEEIRENFLYFFEKKGHKKLPSSSLIPNDPQLLFTVAGMVPFKPIFWGKVEPTYTRITTCQKCLRTNDIENVGRTPRHHTFFEMLGNFSFGDYFKKEAIKWAWEFLTEELGLPAEKLWASVYETDDEAFNIWKDDIKIPENKILRFGKEENWWGPAGQTGPCGPCSEIYFDTGYTENCPDQENCTPACDCGRFVEIWNIVFTEYYSDENGNLSPLPRKNIDTGAGFERICAVTQGKYDNFDSDLFKEIIEEIQRIFGVKFRVNKSKDVSIKVIADHSRAIAFLISEGIIPSNEGRGYVLRRLIRRAVRHGALLEAKGPFLSSILETVIKKMGKIYPELIEKEALIKDISFMEEEKFFETMEKGMERLNNIIQNLNNETTLPGKIAFELYDTYGFPLDLTKEILSEKGIEVDEKEFTELMNKQREMARSASGKVEYDTEKQIYKEIDKFLTPTEFIGYDKLSSTEEVQLIIKGNSIVPQAQEGDEIELFFPKTPFYAERGGQVSDKGVIYNETFEAEVIHVKPIRNEIISHLVKIKKGSIKNGERVFLKVDEKKRKATEKNHTATHLLHSALRKVIGEHIRQAGSYVAPERLRFDFTHYEPLTQDQIKQIEYLINEQIQKAIPVNIYLKSLEEAKSMDVIALFEEKYGEVVRIVEIDDFSRELCGGTHVSNTGEIGLFKILEESSISSGVRRIEAITGFESLNYATELESIMTNLSKMLDSSRDQIPDKIEGILKTIKNQEKEIKQLQFQLATKNIERLAETPQIIEGEKVVVAQLENLEKDVHANTADILLQKLGRGVVILFNKSNNEQVSLVVKVSKDTSKKFHAGNIARKIASYLGGGGGGGPTFAQAGGKYANKVKEVIEHINDFMEV</sequence>
<protein>
    <recommendedName>
        <fullName evidence="1">Alanine--tRNA ligase</fullName>
        <ecNumber evidence="1">6.1.1.7</ecNumber>
    </recommendedName>
    <alternativeName>
        <fullName evidence="1">Alanyl-tRNA synthetase</fullName>
        <shortName evidence="1">AlaRS</shortName>
    </alternativeName>
</protein>
<evidence type="ECO:0000255" key="1">
    <source>
        <dbReference type="HAMAP-Rule" id="MF_00036"/>
    </source>
</evidence>
<comment type="function">
    <text evidence="1">Catalyzes the attachment of alanine to tRNA(Ala) in a two-step reaction: alanine is first activated by ATP to form Ala-AMP and then transferred to the acceptor end of tRNA(Ala). Also edits incorrectly charged Ser-tRNA(Ala) and Gly-tRNA(Ala) via its editing domain.</text>
</comment>
<comment type="catalytic activity">
    <reaction evidence="1">
        <text>tRNA(Ala) + L-alanine + ATP = L-alanyl-tRNA(Ala) + AMP + diphosphate</text>
        <dbReference type="Rhea" id="RHEA:12540"/>
        <dbReference type="Rhea" id="RHEA-COMP:9657"/>
        <dbReference type="Rhea" id="RHEA-COMP:9923"/>
        <dbReference type="ChEBI" id="CHEBI:30616"/>
        <dbReference type="ChEBI" id="CHEBI:33019"/>
        <dbReference type="ChEBI" id="CHEBI:57972"/>
        <dbReference type="ChEBI" id="CHEBI:78442"/>
        <dbReference type="ChEBI" id="CHEBI:78497"/>
        <dbReference type="ChEBI" id="CHEBI:456215"/>
        <dbReference type="EC" id="6.1.1.7"/>
    </reaction>
</comment>
<comment type="cofactor">
    <cofactor evidence="1">
        <name>Zn(2+)</name>
        <dbReference type="ChEBI" id="CHEBI:29105"/>
    </cofactor>
    <text evidence="1">Binds 1 zinc ion per subunit.</text>
</comment>
<comment type="subcellular location">
    <subcellularLocation>
        <location evidence="1">Cytoplasm</location>
    </subcellularLocation>
</comment>
<comment type="domain">
    <text evidence="1">Consists of three domains; the N-terminal catalytic domain, the editing domain and the C-terminal C-Ala domain. The editing domain removes incorrectly charged amino acids, while the C-Ala domain, along with tRNA(Ala), serves as a bridge to cooperatively bring together the editing and aminoacylation centers thus stimulating deacylation of misacylated tRNAs.</text>
</comment>
<comment type="similarity">
    <text evidence="1">Belongs to the class-II aminoacyl-tRNA synthetase family.</text>
</comment>
<proteinExistence type="inferred from homology"/>